<reference key="1">
    <citation type="journal article" date="2003" name="Nat. Genet.">
        <title>Comparative analysis of the genome sequences of Bordetella pertussis, Bordetella parapertussis and Bordetella bronchiseptica.</title>
        <authorList>
            <person name="Parkhill J."/>
            <person name="Sebaihia M."/>
            <person name="Preston A."/>
            <person name="Murphy L.D."/>
            <person name="Thomson N.R."/>
            <person name="Harris D.E."/>
            <person name="Holden M.T.G."/>
            <person name="Churcher C.M."/>
            <person name="Bentley S.D."/>
            <person name="Mungall K.L."/>
            <person name="Cerdeno-Tarraga A.-M."/>
            <person name="Temple L."/>
            <person name="James K.D."/>
            <person name="Harris B."/>
            <person name="Quail M.A."/>
            <person name="Achtman M."/>
            <person name="Atkin R."/>
            <person name="Baker S."/>
            <person name="Basham D."/>
            <person name="Bason N."/>
            <person name="Cherevach I."/>
            <person name="Chillingworth T."/>
            <person name="Collins M."/>
            <person name="Cronin A."/>
            <person name="Davis P."/>
            <person name="Doggett J."/>
            <person name="Feltwell T."/>
            <person name="Goble A."/>
            <person name="Hamlin N."/>
            <person name="Hauser H."/>
            <person name="Holroyd S."/>
            <person name="Jagels K."/>
            <person name="Leather S."/>
            <person name="Moule S."/>
            <person name="Norberczak H."/>
            <person name="O'Neil S."/>
            <person name="Ormond D."/>
            <person name="Price C."/>
            <person name="Rabbinowitsch E."/>
            <person name="Rutter S."/>
            <person name="Sanders M."/>
            <person name="Saunders D."/>
            <person name="Seeger K."/>
            <person name="Sharp S."/>
            <person name="Simmonds M."/>
            <person name="Skelton J."/>
            <person name="Squares R."/>
            <person name="Squares S."/>
            <person name="Stevens K."/>
            <person name="Unwin L."/>
            <person name="Whitehead S."/>
            <person name="Barrell B.G."/>
            <person name="Maskell D.J."/>
        </authorList>
    </citation>
    <scope>NUCLEOTIDE SEQUENCE [LARGE SCALE GENOMIC DNA]</scope>
    <source>
        <strain>ATCC BAA-588 / NCTC 13252 / RB50</strain>
    </source>
</reference>
<organism>
    <name type="scientific">Bordetella bronchiseptica (strain ATCC BAA-588 / NCTC 13252 / RB50)</name>
    <name type="common">Alcaligenes bronchisepticus</name>
    <dbReference type="NCBI Taxonomy" id="257310"/>
    <lineage>
        <taxon>Bacteria</taxon>
        <taxon>Pseudomonadati</taxon>
        <taxon>Pseudomonadota</taxon>
        <taxon>Betaproteobacteria</taxon>
        <taxon>Burkholderiales</taxon>
        <taxon>Alcaligenaceae</taxon>
        <taxon>Bordetella</taxon>
    </lineage>
</organism>
<protein>
    <recommendedName>
        <fullName evidence="1">Phosphatidylglycerol--prolipoprotein diacylglyceryl transferase</fullName>
        <ecNumber evidence="1">2.5.1.145</ecNumber>
    </recommendedName>
</protein>
<accession>Q7WFQ4</accession>
<keyword id="KW-0997">Cell inner membrane</keyword>
<keyword id="KW-1003">Cell membrane</keyword>
<keyword id="KW-0472">Membrane</keyword>
<keyword id="KW-0808">Transferase</keyword>
<keyword id="KW-0812">Transmembrane</keyword>
<keyword id="KW-1133">Transmembrane helix</keyword>
<proteinExistence type="inferred from homology"/>
<dbReference type="EC" id="2.5.1.145" evidence="1"/>
<dbReference type="EMBL" id="BX640449">
    <property type="protein sequence ID" value="CAE34581.1"/>
    <property type="molecule type" value="Genomic_DNA"/>
</dbReference>
<dbReference type="RefSeq" id="WP_003814606.1">
    <property type="nucleotide sequence ID" value="NC_002927.3"/>
</dbReference>
<dbReference type="SMR" id="Q7WFQ4"/>
<dbReference type="GeneID" id="56477286"/>
<dbReference type="KEGG" id="bbr:BB4217"/>
<dbReference type="eggNOG" id="COG0682">
    <property type="taxonomic scope" value="Bacteria"/>
</dbReference>
<dbReference type="HOGENOM" id="CLU_013386_1_0_4"/>
<dbReference type="UniPathway" id="UPA00664"/>
<dbReference type="Proteomes" id="UP000001027">
    <property type="component" value="Chromosome"/>
</dbReference>
<dbReference type="GO" id="GO:0005886">
    <property type="term" value="C:plasma membrane"/>
    <property type="evidence" value="ECO:0007669"/>
    <property type="project" value="UniProtKB-SubCell"/>
</dbReference>
<dbReference type="GO" id="GO:0008961">
    <property type="term" value="F:phosphatidylglycerol-prolipoprotein diacylglyceryl transferase activity"/>
    <property type="evidence" value="ECO:0007669"/>
    <property type="project" value="UniProtKB-UniRule"/>
</dbReference>
<dbReference type="GO" id="GO:0042158">
    <property type="term" value="P:lipoprotein biosynthetic process"/>
    <property type="evidence" value="ECO:0007669"/>
    <property type="project" value="UniProtKB-UniRule"/>
</dbReference>
<dbReference type="HAMAP" id="MF_01147">
    <property type="entry name" value="Lgt"/>
    <property type="match status" value="1"/>
</dbReference>
<dbReference type="InterPro" id="IPR001640">
    <property type="entry name" value="Lgt"/>
</dbReference>
<dbReference type="NCBIfam" id="TIGR00544">
    <property type="entry name" value="lgt"/>
    <property type="match status" value="1"/>
</dbReference>
<dbReference type="PANTHER" id="PTHR30589:SF0">
    <property type="entry name" value="PHOSPHATIDYLGLYCEROL--PROLIPOPROTEIN DIACYLGLYCERYL TRANSFERASE"/>
    <property type="match status" value="1"/>
</dbReference>
<dbReference type="PANTHER" id="PTHR30589">
    <property type="entry name" value="PROLIPOPROTEIN DIACYLGLYCERYL TRANSFERASE"/>
    <property type="match status" value="1"/>
</dbReference>
<dbReference type="Pfam" id="PF01790">
    <property type="entry name" value="LGT"/>
    <property type="match status" value="1"/>
</dbReference>
<dbReference type="PROSITE" id="PS01311">
    <property type="entry name" value="LGT"/>
    <property type="match status" value="1"/>
</dbReference>
<name>LGT_BORBR</name>
<sequence length="262" mass="29078">MLQYPQIDPVALRIGPLAIHWYGLMYLIGFALVYALGRRRITSGHTTSMTVRDLEDLIFYSVLGVVLGGRLGYVLFYKPAHYLANPLEIFYLWEGGMSFHGGLIGVIVVMLLFAHKKRLGFFTVSDFIAPLIPLGLAAGRLGNFINGELWGRPTDVPWAMVFPQSGDGLPRHPSQLYELGLEGIVLFALLWWYSSKPRAAGQVSAMFLMGYGAFRFLVEFTREPDNFLGLLAAGLSMGQWLSIPMVLAGAGLYLFTARPPSR</sequence>
<comment type="function">
    <text evidence="1">Catalyzes the transfer of the diacylglyceryl group from phosphatidylglycerol to the sulfhydryl group of the N-terminal cysteine of a prolipoprotein, the first step in the formation of mature lipoproteins.</text>
</comment>
<comment type="catalytic activity">
    <reaction evidence="1">
        <text>L-cysteinyl-[prolipoprotein] + a 1,2-diacyl-sn-glycero-3-phospho-(1'-sn-glycerol) = an S-1,2-diacyl-sn-glyceryl-L-cysteinyl-[prolipoprotein] + sn-glycerol 1-phosphate + H(+)</text>
        <dbReference type="Rhea" id="RHEA:56712"/>
        <dbReference type="Rhea" id="RHEA-COMP:14679"/>
        <dbReference type="Rhea" id="RHEA-COMP:14680"/>
        <dbReference type="ChEBI" id="CHEBI:15378"/>
        <dbReference type="ChEBI" id="CHEBI:29950"/>
        <dbReference type="ChEBI" id="CHEBI:57685"/>
        <dbReference type="ChEBI" id="CHEBI:64716"/>
        <dbReference type="ChEBI" id="CHEBI:140658"/>
        <dbReference type="EC" id="2.5.1.145"/>
    </reaction>
</comment>
<comment type="pathway">
    <text evidence="1">Protein modification; lipoprotein biosynthesis (diacylglyceryl transfer).</text>
</comment>
<comment type="subcellular location">
    <subcellularLocation>
        <location evidence="1">Cell inner membrane</location>
        <topology evidence="1">Multi-pass membrane protein</topology>
    </subcellularLocation>
</comment>
<comment type="similarity">
    <text evidence="1">Belongs to the Lgt family.</text>
</comment>
<gene>
    <name evidence="1" type="primary">lgt</name>
    <name type="ordered locus">BB4217</name>
</gene>
<feature type="chain" id="PRO_0000172562" description="Phosphatidylglycerol--prolipoprotein diacylglyceryl transferase">
    <location>
        <begin position="1"/>
        <end position="262"/>
    </location>
</feature>
<feature type="transmembrane region" description="Helical" evidence="1">
    <location>
        <begin position="17"/>
        <end position="37"/>
    </location>
</feature>
<feature type="transmembrane region" description="Helical" evidence="1">
    <location>
        <begin position="57"/>
        <end position="77"/>
    </location>
</feature>
<feature type="transmembrane region" description="Helical" evidence="1">
    <location>
        <begin position="95"/>
        <end position="115"/>
    </location>
</feature>
<feature type="transmembrane region" description="Helical" evidence="1">
    <location>
        <begin position="119"/>
        <end position="139"/>
    </location>
</feature>
<feature type="transmembrane region" description="Helical" evidence="1">
    <location>
        <begin position="173"/>
        <end position="193"/>
    </location>
</feature>
<feature type="transmembrane region" description="Helical" evidence="1">
    <location>
        <begin position="200"/>
        <end position="220"/>
    </location>
</feature>
<feature type="transmembrane region" description="Helical" evidence="1">
    <location>
        <begin position="227"/>
        <end position="247"/>
    </location>
</feature>
<feature type="binding site" evidence="1">
    <location>
        <position position="140"/>
    </location>
    <ligand>
        <name>a 1,2-diacyl-sn-glycero-3-phospho-(1'-sn-glycerol)</name>
        <dbReference type="ChEBI" id="CHEBI:64716"/>
    </ligand>
</feature>
<evidence type="ECO:0000255" key="1">
    <source>
        <dbReference type="HAMAP-Rule" id="MF_01147"/>
    </source>
</evidence>